<accession>B8GYW7</accession>
<dbReference type="EMBL" id="CP001340">
    <property type="protein sequence ID" value="ACL95890.1"/>
    <property type="molecule type" value="Genomic_DNA"/>
</dbReference>
<dbReference type="RefSeq" id="WP_010920199.1">
    <property type="nucleotide sequence ID" value="NC_011916.1"/>
</dbReference>
<dbReference type="RefSeq" id="YP_002517798.1">
    <property type="nucleotide sequence ID" value="NC_011916.1"/>
</dbReference>
<dbReference type="SMR" id="B8GYW7"/>
<dbReference type="GeneID" id="7331659"/>
<dbReference type="KEGG" id="ccs:CCNA_02425"/>
<dbReference type="PATRIC" id="fig|565050.3.peg.2378"/>
<dbReference type="HOGENOM" id="CLU_178280_2_1_5"/>
<dbReference type="OrthoDB" id="9809663at2"/>
<dbReference type="PhylomeDB" id="B8GYW7"/>
<dbReference type="Proteomes" id="UP000001364">
    <property type="component" value="Chromosome"/>
</dbReference>
<dbReference type="GO" id="GO:0008657">
    <property type="term" value="F:DNA topoisomerase type II (double strand cut, ATP-hydrolyzing) inhibitor activity"/>
    <property type="evidence" value="ECO:0007669"/>
    <property type="project" value="UniProtKB-UniRule"/>
</dbReference>
<dbReference type="GO" id="GO:0008270">
    <property type="term" value="F:zinc ion binding"/>
    <property type="evidence" value="ECO:0007669"/>
    <property type="project" value="UniProtKB-UniRule"/>
</dbReference>
<dbReference type="GO" id="GO:0006355">
    <property type="term" value="P:regulation of DNA-templated transcription"/>
    <property type="evidence" value="ECO:0007669"/>
    <property type="project" value="InterPro"/>
</dbReference>
<dbReference type="Gene3D" id="3.30.50.10">
    <property type="entry name" value="Erythroid Transcription Factor GATA-1, subunit A"/>
    <property type="match status" value="1"/>
</dbReference>
<dbReference type="HAMAP" id="MF_00649">
    <property type="entry name" value="DNA_gyrase_inhibitor_YacG"/>
    <property type="match status" value="1"/>
</dbReference>
<dbReference type="InterPro" id="IPR005584">
    <property type="entry name" value="DNA_gyrase_inhibitor_YacG"/>
</dbReference>
<dbReference type="InterPro" id="IPR013088">
    <property type="entry name" value="Znf_NHR/GATA"/>
</dbReference>
<dbReference type="PANTHER" id="PTHR36150">
    <property type="entry name" value="DNA GYRASE INHIBITOR YACG"/>
    <property type="match status" value="1"/>
</dbReference>
<dbReference type="PANTHER" id="PTHR36150:SF1">
    <property type="entry name" value="DNA GYRASE INHIBITOR YACG"/>
    <property type="match status" value="1"/>
</dbReference>
<dbReference type="Pfam" id="PF03884">
    <property type="entry name" value="YacG"/>
    <property type="match status" value="1"/>
</dbReference>
<dbReference type="SUPFAM" id="SSF57716">
    <property type="entry name" value="Glucocorticoid receptor-like (DNA-binding domain)"/>
    <property type="match status" value="1"/>
</dbReference>
<evidence type="ECO:0000255" key="1">
    <source>
        <dbReference type="HAMAP-Rule" id="MF_00649"/>
    </source>
</evidence>
<organism>
    <name type="scientific">Caulobacter vibrioides (strain NA1000 / CB15N)</name>
    <name type="common">Caulobacter crescentus</name>
    <dbReference type="NCBI Taxonomy" id="565050"/>
    <lineage>
        <taxon>Bacteria</taxon>
        <taxon>Pseudomonadati</taxon>
        <taxon>Pseudomonadota</taxon>
        <taxon>Alphaproteobacteria</taxon>
        <taxon>Caulobacterales</taxon>
        <taxon>Caulobacteraceae</taxon>
        <taxon>Caulobacter</taxon>
    </lineage>
</organism>
<gene>
    <name evidence="1" type="primary">yacG</name>
    <name type="ordered locus">CCNA_02425</name>
</gene>
<keyword id="KW-0479">Metal-binding</keyword>
<keyword id="KW-1185">Reference proteome</keyword>
<keyword id="KW-0862">Zinc</keyword>
<sequence>MSAKCPICAKPVDSAFRPFCSKRCADVDLQRWLSGRYVVAGGDDDEENPPSQDINRE</sequence>
<comment type="function">
    <text evidence="1">Inhibits all the catalytic activities of DNA gyrase by preventing its interaction with DNA. Acts by binding directly to the C-terminal domain of GyrB, which probably disrupts DNA binding by the gyrase.</text>
</comment>
<comment type="cofactor">
    <cofactor evidence="1">
        <name>Zn(2+)</name>
        <dbReference type="ChEBI" id="CHEBI:29105"/>
    </cofactor>
    <text evidence="1">Binds 1 zinc ion.</text>
</comment>
<comment type="subunit">
    <text evidence="1">Interacts with GyrB.</text>
</comment>
<comment type="similarity">
    <text evidence="1">Belongs to the DNA gyrase inhibitor YacG family.</text>
</comment>
<name>YACG_CAUVN</name>
<reference key="1">
    <citation type="journal article" date="2010" name="J. Bacteriol.">
        <title>The genetic basis of laboratory adaptation in Caulobacter crescentus.</title>
        <authorList>
            <person name="Marks M.E."/>
            <person name="Castro-Rojas C.M."/>
            <person name="Teiling C."/>
            <person name="Du L."/>
            <person name="Kapatral V."/>
            <person name="Walunas T.L."/>
            <person name="Crosson S."/>
        </authorList>
    </citation>
    <scope>NUCLEOTIDE SEQUENCE [LARGE SCALE GENOMIC DNA]</scope>
    <source>
        <strain>NA1000 / CB15N</strain>
    </source>
</reference>
<protein>
    <recommendedName>
        <fullName evidence="1">DNA gyrase inhibitor YacG</fullName>
    </recommendedName>
</protein>
<proteinExistence type="inferred from homology"/>
<feature type="chain" id="PRO_1000200404" description="DNA gyrase inhibitor YacG">
    <location>
        <begin position="1"/>
        <end position="57"/>
    </location>
</feature>
<feature type="binding site" evidence="1">
    <location>
        <position position="5"/>
    </location>
    <ligand>
        <name>Zn(2+)</name>
        <dbReference type="ChEBI" id="CHEBI:29105"/>
    </ligand>
</feature>
<feature type="binding site" evidence="1">
    <location>
        <position position="8"/>
    </location>
    <ligand>
        <name>Zn(2+)</name>
        <dbReference type="ChEBI" id="CHEBI:29105"/>
    </ligand>
</feature>
<feature type="binding site" evidence="1">
    <location>
        <position position="20"/>
    </location>
    <ligand>
        <name>Zn(2+)</name>
        <dbReference type="ChEBI" id="CHEBI:29105"/>
    </ligand>
</feature>
<feature type="binding site" evidence="1">
    <location>
        <position position="24"/>
    </location>
    <ligand>
        <name>Zn(2+)</name>
        <dbReference type="ChEBI" id="CHEBI:29105"/>
    </ligand>
</feature>